<accession>Q2KJD0</accession>
<accession>A5D9A3</accession>
<protein>
    <recommendedName>
        <fullName>Tubulin beta-5 chain</fullName>
    </recommendedName>
</protein>
<reference key="1">
    <citation type="journal article" date="2005" name="BMC Genomics">
        <title>Characterization of 954 bovine full-CDS cDNA sequences.</title>
        <authorList>
            <person name="Harhay G.P."/>
            <person name="Sonstegard T.S."/>
            <person name="Keele J.W."/>
            <person name="Heaton M.P."/>
            <person name="Clawson M.L."/>
            <person name="Snelling W.M."/>
            <person name="Wiedmann R.T."/>
            <person name="Van Tassell C.P."/>
            <person name="Smith T.P.L."/>
        </authorList>
    </citation>
    <scope>NUCLEOTIDE SEQUENCE [LARGE SCALE MRNA]</scope>
</reference>
<reference key="2">
    <citation type="submission" date="2005-09" db="EMBL/GenBank/DDBJ databases">
        <authorList>
            <consortium name="NIH - Mammalian Gene Collection (MGC) project"/>
        </authorList>
    </citation>
    <scope>NUCLEOTIDE SEQUENCE [LARGE SCALE MRNA]</scope>
    <source>
        <strain>Crossbred X Angus</strain>
        <tissue>Ileum</tissue>
    </source>
</reference>
<reference key="3">
    <citation type="journal article" date="1984" name="Nature">
        <title>Dynamic instability of microtubule growth.</title>
        <authorList>
            <person name="Mitchison T."/>
            <person name="Kirschner M."/>
        </authorList>
    </citation>
    <scope>FUNCTION</scope>
    <scope>SUBUNIT</scope>
    <scope>SUBCELLULAR LOCATION</scope>
</reference>
<reference key="4">
    <citation type="journal article" date="1990" name="Biochemistry">
        <title>Role of GTP hydrolysis in microtubule polymerization: evidence for a coupled hydrolysis mechanism.</title>
        <authorList>
            <person name="Stewart R.J."/>
            <person name="Farrell K.W."/>
            <person name="Wilson L."/>
        </authorList>
    </citation>
    <scope>FUNCTION</scope>
    <scope>SUBUNIT</scope>
    <scope>SUBCELLULAR LOCATION</scope>
</reference>
<reference key="5">
    <citation type="journal article" date="1994" name="Curr. Biol.">
        <title>The minimum GTP cap required to stabilize microtubules.</title>
        <authorList>
            <person name="Drechsel D.N."/>
            <person name="Kirschner M.W."/>
        </authorList>
    </citation>
    <scope>FUNCTION</scope>
    <scope>SUBUNIT</scope>
    <scope>SUBCELLULAR LOCATION</scope>
</reference>
<evidence type="ECO:0000250" key="1">
    <source>
        <dbReference type="UniProtKB" id="P07437"/>
    </source>
</evidence>
<evidence type="ECO:0000250" key="2">
    <source>
        <dbReference type="UniProtKB" id="P68363"/>
    </source>
</evidence>
<evidence type="ECO:0000250" key="3">
    <source>
        <dbReference type="UniProtKB" id="P69893"/>
    </source>
</evidence>
<evidence type="ECO:0000250" key="4">
    <source>
        <dbReference type="UniProtKB" id="P99024"/>
    </source>
</evidence>
<evidence type="ECO:0000250" key="5">
    <source>
        <dbReference type="UniProtKB" id="Q13509"/>
    </source>
</evidence>
<evidence type="ECO:0000250" key="6">
    <source>
        <dbReference type="UniProtKB" id="Q2T9S0"/>
    </source>
</evidence>
<evidence type="ECO:0000250" key="7">
    <source>
        <dbReference type="UniProtKB" id="Q71U36"/>
    </source>
</evidence>
<evidence type="ECO:0000256" key="8">
    <source>
        <dbReference type="SAM" id="MobiDB-lite"/>
    </source>
</evidence>
<evidence type="ECO:0000269" key="9">
    <source>
    </source>
</evidence>
<evidence type="ECO:0000269" key="10">
    <source>
    </source>
</evidence>
<evidence type="ECO:0000269" key="11">
    <source>
    </source>
</evidence>
<evidence type="ECO:0000305" key="12"/>
<feature type="chain" id="PRO_0000288844" description="Tubulin beta-5 chain">
    <location>
        <begin position="1"/>
        <end position="444"/>
    </location>
</feature>
<feature type="region of interest" description="Disordered" evidence="8">
    <location>
        <begin position="423"/>
        <end position="444"/>
    </location>
</feature>
<feature type="short sequence motif" description="MREI motif" evidence="1">
    <location>
        <begin position="1"/>
        <end position="4"/>
    </location>
</feature>
<feature type="compositionally biased region" description="Acidic residues" evidence="8">
    <location>
        <begin position="429"/>
        <end position="444"/>
    </location>
</feature>
<feature type="binding site" evidence="5">
    <location>
        <position position="11"/>
    </location>
    <ligand>
        <name>GTP</name>
        <dbReference type="ChEBI" id="CHEBI:37565"/>
    </ligand>
</feature>
<feature type="binding site" evidence="2">
    <location>
        <position position="69"/>
    </location>
    <ligand>
        <name>GTP</name>
        <dbReference type="ChEBI" id="CHEBI:37565"/>
    </ligand>
</feature>
<feature type="binding site" evidence="2">
    <location>
        <position position="69"/>
    </location>
    <ligand>
        <name>Mg(2+)</name>
        <dbReference type="ChEBI" id="CHEBI:18420"/>
    </ligand>
</feature>
<feature type="binding site" evidence="5">
    <location>
        <position position="138"/>
    </location>
    <ligand>
        <name>GTP</name>
        <dbReference type="ChEBI" id="CHEBI:37565"/>
    </ligand>
</feature>
<feature type="binding site" evidence="5">
    <location>
        <position position="142"/>
    </location>
    <ligand>
        <name>GTP</name>
        <dbReference type="ChEBI" id="CHEBI:37565"/>
    </ligand>
</feature>
<feature type="binding site" evidence="5">
    <location>
        <position position="143"/>
    </location>
    <ligand>
        <name>GTP</name>
        <dbReference type="ChEBI" id="CHEBI:37565"/>
    </ligand>
</feature>
<feature type="binding site" evidence="5">
    <location>
        <position position="144"/>
    </location>
    <ligand>
        <name>GTP</name>
        <dbReference type="ChEBI" id="CHEBI:37565"/>
    </ligand>
</feature>
<feature type="binding site" evidence="5">
    <location>
        <position position="204"/>
    </location>
    <ligand>
        <name>GTP</name>
        <dbReference type="ChEBI" id="CHEBI:37565"/>
    </ligand>
</feature>
<feature type="binding site" evidence="5">
    <location>
        <position position="226"/>
    </location>
    <ligand>
        <name>GTP</name>
        <dbReference type="ChEBI" id="CHEBI:37565"/>
    </ligand>
</feature>
<feature type="modified residue" description="Phosphoserine" evidence="4">
    <location>
        <position position="40"/>
    </location>
</feature>
<feature type="modified residue" description="Phosphothreonine" evidence="1">
    <location>
        <position position="55"/>
    </location>
</feature>
<feature type="modified residue" description="N6-acetyllysine; alternate" evidence="1">
    <location>
        <position position="58"/>
    </location>
</feature>
<feature type="modified residue" description="N6-succinyllysine; alternate" evidence="4">
    <location>
        <position position="58"/>
    </location>
</feature>
<feature type="modified residue" description="Phosphoserine; by CDK1" evidence="1">
    <location>
        <position position="172"/>
    </location>
</feature>
<feature type="modified residue" description="Phosphothreonine" evidence="1">
    <location>
        <position position="285"/>
    </location>
</feature>
<feature type="modified residue" description="Phosphothreonine" evidence="1">
    <location>
        <position position="290"/>
    </location>
</feature>
<feature type="modified residue" description="Omega-N-methylarginine" evidence="1">
    <location>
        <position position="318"/>
    </location>
</feature>
<feature type="modified residue" description="5-glutamyl polyglutamate" evidence="1">
    <location>
        <position position="434"/>
    </location>
</feature>
<feature type="modified residue" description="5-glutamyl glycine" evidence="1">
    <location>
        <position position="438"/>
    </location>
</feature>
<feature type="modified residue" description="5-glutamyl polyglutamate" evidence="6">
    <location>
        <position position="438"/>
    </location>
</feature>
<feature type="modified residue" description="5-glutamyl glycine" evidence="1">
    <location>
        <position position="439"/>
    </location>
</feature>
<feature type="modified residue" description="5-glutamyl polyglutamate" evidence="1">
    <location>
        <position position="439"/>
    </location>
</feature>
<feature type="modified residue" description="5-glutamyl glycine" evidence="1">
    <location>
        <position position="441"/>
    </location>
</feature>
<feature type="modified residue" description="5-glutamyl polyglutamate" evidence="1">
    <location>
        <position position="441"/>
    </location>
</feature>
<feature type="modified residue" description="5-glutamyl glycine" evidence="1">
    <location>
        <position position="442"/>
    </location>
</feature>
<feature type="modified residue" description="5-glutamyl glycine" evidence="1">
    <location>
        <position position="443"/>
    </location>
</feature>
<feature type="cross-link" description="Glycyl lysine isopeptide (Lys-Gly) (interchain with G-Cter in ubiquitin); alternate" evidence="1">
    <location>
        <position position="58"/>
    </location>
</feature>
<feature type="cross-link" description="Glycyl lysine isopeptide (Lys-Gly) (interchain with G-Cter in ubiquitin)" evidence="1">
    <location>
        <position position="324"/>
    </location>
</feature>
<dbReference type="EMBL" id="BT030522">
    <property type="protein sequence ID" value="ABQ12962.1"/>
    <property type="molecule type" value="mRNA"/>
</dbReference>
<dbReference type="EMBL" id="BC105401">
    <property type="protein sequence ID" value="AAI05402.1"/>
    <property type="molecule type" value="mRNA"/>
</dbReference>
<dbReference type="RefSeq" id="NP_001040014.1">
    <property type="nucleotide sequence ID" value="NM_001046549.2"/>
</dbReference>
<dbReference type="SMR" id="Q2KJD0"/>
<dbReference type="BioGRID" id="542712">
    <property type="interactions" value="8"/>
</dbReference>
<dbReference type="CORUM" id="Q2KJD0"/>
<dbReference type="FunCoup" id="Q2KJD0">
    <property type="interactions" value="2247"/>
</dbReference>
<dbReference type="STRING" id="9913.ENSBTAP00000009158"/>
<dbReference type="iPTMnet" id="Q2KJD0"/>
<dbReference type="PaxDb" id="9913-ENSBTAP00000009158"/>
<dbReference type="PeptideAtlas" id="Q2KJD0"/>
<dbReference type="Ensembl" id="ENSBTAT00000009158.6">
    <property type="protein sequence ID" value="ENSBTAP00000009158.4"/>
    <property type="gene ID" value="ENSBTAG00000006969.6"/>
</dbReference>
<dbReference type="GeneID" id="615087"/>
<dbReference type="KEGG" id="bta:615087"/>
<dbReference type="CTD" id="203068"/>
<dbReference type="VEuPathDB" id="HostDB:ENSBTAG00000006969"/>
<dbReference type="VGNC" id="VGNC:103058">
    <property type="gene designation" value="TUBB"/>
</dbReference>
<dbReference type="eggNOG" id="KOG1375">
    <property type="taxonomic scope" value="Eukaryota"/>
</dbReference>
<dbReference type="GeneTree" id="ENSGT00940000154370"/>
<dbReference type="HOGENOM" id="CLU_015718_1_1_1"/>
<dbReference type="InParanoid" id="Q2KJD0"/>
<dbReference type="OMA" id="MANTTKY"/>
<dbReference type="OrthoDB" id="9820704at2759"/>
<dbReference type="TreeFam" id="TF300298"/>
<dbReference type="Reactome" id="R-BTA-2565942">
    <property type="pathway name" value="Regulation of PLK1 Activity at G2/M Transition"/>
</dbReference>
<dbReference type="Reactome" id="R-BTA-380259">
    <property type="pathway name" value="Loss of Nlp from mitotic centrosomes"/>
</dbReference>
<dbReference type="Reactome" id="R-BTA-380270">
    <property type="pathway name" value="Recruitment of mitotic centrosome proteins and complexes"/>
</dbReference>
<dbReference type="Reactome" id="R-BTA-380284">
    <property type="pathway name" value="Loss of proteins required for interphase microtubule organization from the centrosome"/>
</dbReference>
<dbReference type="Reactome" id="R-BTA-380320">
    <property type="pathway name" value="Recruitment of NuMA to mitotic centrosomes"/>
</dbReference>
<dbReference type="Reactome" id="R-BTA-5620912">
    <property type="pathway name" value="Anchoring of the basal body to the plasma membrane"/>
</dbReference>
<dbReference type="Reactome" id="R-BTA-6798695">
    <property type="pathway name" value="Neutrophil degranulation"/>
</dbReference>
<dbReference type="Reactome" id="R-BTA-8854518">
    <property type="pathway name" value="AURKA Activation by TPX2"/>
</dbReference>
<dbReference type="Proteomes" id="UP000009136">
    <property type="component" value="Chromosome 23"/>
</dbReference>
<dbReference type="Bgee" id="ENSBTAG00000006969">
    <property type="expression patterns" value="Expressed in Ammon's horn and 108 other cell types or tissues"/>
</dbReference>
<dbReference type="GO" id="GO:0044297">
    <property type="term" value="C:cell body"/>
    <property type="evidence" value="ECO:0007669"/>
    <property type="project" value="Ensembl"/>
</dbReference>
<dbReference type="GO" id="GO:0005737">
    <property type="term" value="C:cytoplasm"/>
    <property type="evidence" value="ECO:0000318"/>
    <property type="project" value="GO_Central"/>
</dbReference>
<dbReference type="GO" id="GO:0036464">
    <property type="term" value="C:cytoplasmic ribonucleoprotein granule"/>
    <property type="evidence" value="ECO:0007669"/>
    <property type="project" value="Ensembl"/>
</dbReference>
<dbReference type="GO" id="GO:0045171">
    <property type="term" value="C:intercellular bridge"/>
    <property type="evidence" value="ECO:0007669"/>
    <property type="project" value="Ensembl"/>
</dbReference>
<dbReference type="GO" id="GO:0005874">
    <property type="term" value="C:microtubule"/>
    <property type="evidence" value="ECO:0000318"/>
    <property type="project" value="GO_Central"/>
</dbReference>
<dbReference type="GO" id="GO:0072686">
    <property type="term" value="C:mitotic spindle"/>
    <property type="evidence" value="ECO:0007669"/>
    <property type="project" value="Ensembl"/>
</dbReference>
<dbReference type="GO" id="GO:0005641">
    <property type="term" value="C:nuclear envelope lumen"/>
    <property type="evidence" value="ECO:0007669"/>
    <property type="project" value="Ensembl"/>
</dbReference>
<dbReference type="GO" id="GO:0005525">
    <property type="term" value="F:GTP binding"/>
    <property type="evidence" value="ECO:0000318"/>
    <property type="project" value="GO_Central"/>
</dbReference>
<dbReference type="GO" id="GO:0003924">
    <property type="term" value="F:GTPase activity"/>
    <property type="evidence" value="ECO:0007669"/>
    <property type="project" value="InterPro"/>
</dbReference>
<dbReference type="GO" id="GO:0046872">
    <property type="term" value="F:metal ion binding"/>
    <property type="evidence" value="ECO:0007669"/>
    <property type="project" value="UniProtKB-KW"/>
</dbReference>
<dbReference type="GO" id="GO:0042288">
    <property type="term" value="F:MHC class I protein binding"/>
    <property type="evidence" value="ECO:0007669"/>
    <property type="project" value="Ensembl"/>
</dbReference>
<dbReference type="GO" id="GO:0005200">
    <property type="term" value="F:structural constituent of cytoskeleton"/>
    <property type="evidence" value="ECO:0000318"/>
    <property type="project" value="GO_Central"/>
</dbReference>
<dbReference type="GO" id="GO:0031625">
    <property type="term" value="F:ubiquitin protein ligase binding"/>
    <property type="evidence" value="ECO:0007669"/>
    <property type="project" value="Ensembl"/>
</dbReference>
<dbReference type="GO" id="GO:0000226">
    <property type="term" value="P:microtubule cytoskeleton organization"/>
    <property type="evidence" value="ECO:0000318"/>
    <property type="project" value="GO_Central"/>
</dbReference>
<dbReference type="GO" id="GO:0000278">
    <property type="term" value="P:mitotic cell cycle"/>
    <property type="evidence" value="ECO:0000318"/>
    <property type="project" value="GO_Central"/>
</dbReference>
<dbReference type="GO" id="GO:0071895">
    <property type="term" value="P:odontoblast differentiation"/>
    <property type="evidence" value="ECO:0007669"/>
    <property type="project" value="Ensembl"/>
</dbReference>
<dbReference type="GO" id="GO:0050807">
    <property type="term" value="P:regulation of synapse organization"/>
    <property type="evidence" value="ECO:0007669"/>
    <property type="project" value="Ensembl"/>
</dbReference>
<dbReference type="GO" id="GO:0051225">
    <property type="term" value="P:spindle assembly"/>
    <property type="evidence" value="ECO:0007669"/>
    <property type="project" value="Ensembl"/>
</dbReference>
<dbReference type="CDD" id="cd02187">
    <property type="entry name" value="beta_tubulin"/>
    <property type="match status" value="1"/>
</dbReference>
<dbReference type="FunFam" id="1.10.287.600:FF:000002">
    <property type="entry name" value="Tubulin beta chain"/>
    <property type="match status" value="1"/>
</dbReference>
<dbReference type="FunFam" id="3.30.1330.20:FF:000002">
    <property type="entry name" value="Tubulin beta chain"/>
    <property type="match status" value="1"/>
</dbReference>
<dbReference type="FunFam" id="3.40.50.1440:FF:000003">
    <property type="entry name" value="Tubulin beta chain"/>
    <property type="match status" value="1"/>
</dbReference>
<dbReference type="Gene3D" id="1.10.287.600">
    <property type="entry name" value="Helix hairpin bin"/>
    <property type="match status" value="1"/>
</dbReference>
<dbReference type="Gene3D" id="3.30.1330.20">
    <property type="entry name" value="Tubulin/FtsZ, C-terminal domain"/>
    <property type="match status" value="1"/>
</dbReference>
<dbReference type="Gene3D" id="3.40.50.1440">
    <property type="entry name" value="Tubulin/FtsZ, GTPase domain"/>
    <property type="match status" value="1"/>
</dbReference>
<dbReference type="InterPro" id="IPR013838">
    <property type="entry name" value="Beta-tubulin_BS"/>
</dbReference>
<dbReference type="InterPro" id="IPR002453">
    <property type="entry name" value="Beta_tubulin"/>
</dbReference>
<dbReference type="InterPro" id="IPR008280">
    <property type="entry name" value="Tub_FtsZ_C"/>
</dbReference>
<dbReference type="InterPro" id="IPR000217">
    <property type="entry name" value="Tubulin"/>
</dbReference>
<dbReference type="InterPro" id="IPR037103">
    <property type="entry name" value="Tubulin/FtsZ-like_C"/>
</dbReference>
<dbReference type="InterPro" id="IPR018316">
    <property type="entry name" value="Tubulin/FtsZ_2-layer-sand-dom"/>
</dbReference>
<dbReference type="InterPro" id="IPR036525">
    <property type="entry name" value="Tubulin/FtsZ_GTPase_sf"/>
</dbReference>
<dbReference type="InterPro" id="IPR023123">
    <property type="entry name" value="Tubulin_C"/>
</dbReference>
<dbReference type="InterPro" id="IPR017975">
    <property type="entry name" value="Tubulin_CS"/>
</dbReference>
<dbReference type="InterPro" id="IPR003008">
    <property type="entry name" value="Tubulin_FtsZ_GTPase"/>
</dbReference>
<dbReference type="PANTHER" id="PTHR11588">
    <property type="entry name" value="TUBULIN"/>
    <property type="match status" value="1"/>
</dbReference>
<dbReference type="Pfam" id="PF00091">
    <property type="entry name" value="Tubulin"/>
    <property type="match status" value="1"/>
</dbReference>
<dbReference type="Pfam" id="PF03953">
    <property type="entry name" value="Tubulin_C"/>
    <property type="match status" value="1"/>
</dbReference>
<dbReference type="PRINTS" id="PR01163">
    <property type="entry name" value="BETATUBULIN"/>
</dbReference>
<dbReference type="PRINTS" id="PR01161">
    <property type="entry name" value="TUBULIN"/>
</dbReference>
<dbReference type="SMART" id="SM00864">
    <property type="entry name" value="Tubulin"/>
    <property type="match status" value="1"/>
</dbReference>
<dbReference type="SMART" id="SM00865">
    <property type="entry name" value="Tubulin_C"/>
    <property type="match status" value="1"/>
</dbReference>
<dbReference type="SUPFAM" id="SSF55307">
    <property type="entry name" value="Tubulin C-terminal domain-like"/>
    <property type="match status" value="1"/>
</dbReference>
<dbReference type="SUPFAM" id="SSF52490">
    <property type="entry name" value="Tubulin nucleotide-binding domain-like"/>
    <property type="match status" value="1"/>
</dbReference>
<dbReference type="PROSITE" id="PS00227">
    <property type="entry name" value="TUBULIN"/>
    <property type="match status" value="1"/>
</dbReference>
<dbReference type="PROSITE" id="PS00228">
    <property type="entry name" value="TUBULIN_B_AUTOREG"/>
    <property type="match status" value="1"/>
</dbReference>
<comment type="function">
    <text evidence="9 10 11">Tubulin is the major constituent of microtubules, a cylinder consisting of laterally associated linear protofilaments composed of alpha- and beta-tubulin heterodimers (PubMed:2207090, PubMed:6504138, PubMed:7704569). Microtubules grow by the addition of GTP-tubulin dimers to the microtubule end, where a stabilizing cap forms. Below the cap, tubulin dimers are in GDP-bound state, owing to GTPase activity of alpha-tubulin (PubMed:2207090, PubMed:6504138, PubMed:7704569).</text>
</comment>
<comment type="cofactor">
    <cofactor evidence="2">
        <name>Mg(2+)</name>
        <dbReference type="ChEBI" id="CHEBI:18420"/>
    </cofactor>
</comment>
<comment type="subunit">
    <text evidence="1 3 4 9 10 11">Dimer of alpha and beta chains (PubMed:2207090, PubMed:6504138, PubMed:7704569). A typical microtubule is a hollow water-filled tube with an outer diameter of 25 nm and an inner diameter of 15 nM. Alpha-beta heterodimers associate head-to-tail to form protofilaments running lengthwise along the microtubule wall with the beta-tubulin subunit facing the microtubule plus end conferring a structural polarity. Microtubules usually have 13 protofilaments but different protofilament numbers can be found in some organisms and specialized cells. Interacts with CIMAP3. Interacts with DIAPH1 (By similarity). Interacts with MX1 (By similarity). May interact with RNABP10 (By similarity). Interacts with CFAP157 (By similarity). Nascent tubulin polypeptide interacts (via beta-tubulin MREI motif) with TTC5/STRAP; this interaction results in tubulin mRNA-targeted degradation (By similarity).</text>
</comment>
<comment type="subcellular location">
    <subcellularLocation>
        <location evidence="9 10 11">Cytoplasm</location>
        <location evidence="9 10 11">Cytoskeleton</location>
    </subcellularLocation>
</comment>
<comment type="domain">
    <text evidence="1">The MREI motif is common among all beta-tubulin isoforms and may be critical for tubulin autoregulation.</text>
</comment>
<comment type="PTM">
    <text evidence="4">Some glutamate residues at the C-terminus are polyglycylated, resulting in polyglycine chains on the gamma-carboxyl group. Glycylation is mainly limited to tubulin incorporated into axonemes (cilia and flagella) whereas glutamylation is prevalent in neuronal cells, centrioles, axonemes, and the mitotic spindle. Both modifications can coexist on the same protein on adjacent residues, and lowering polyglycylation levels increases polyglutamylation, and reciprocally. Cilia and flagella glycylation is required for their stability and maintenance. Flagella glycylation controls sperm motility.</text>
</comment>
<comment type="PTM">
    <text evidence="4 7">Some glutamate residues at the C-terminus are polyglutamylated, resulting in polyglutamate chains on the gamma-carboxyl group (By similarity). Polyglutamylation plays a key role in microtubule severing by spastin (SPAST). SPAST preferentially recognizes and acts on microtubules decorated with short polyglutamate tails: severing activity by SPAST increases as the number of glutamates per tubulin rises from one to eight, but decreases beyond this glutamylation threshold (By similarity). Glutamylation is also involved in cilia motility (By similarity).</text>
</comment>
<comment type="PTM">
    <text evidence="1">Phosphorylated on Ser-172 by CDK1 during the cell cycle, from metaphase to telophase, but not in interphase. This phosphorylation inhibits tubulin incorporation into microtubules.</text>
</comment>
<comment type="similarity">
    <text evidence="12">Belongs to the tubulin family.</text>
</comment>
<sequence length="444" mass="49671">MREIVHIQAGQCGNQIGAKFWEVISDEHGIDPTGTYHGDSDLQLDRISVYYNEATGGKYVPRAILVDLEPGTMDSVRSGPFGQIFRPDNFVFGQSGAGNNWAKGHYTEGAELVDSVLDVVRKEAESCDCLQGFQLTHSLGGGTGSGMGTLLISKIREEYPDRIMNTFSVVPSPKVSDTVVEPYNATLSVHQLVENTDETYCIDNEALYDICFRTLKLTTPTYGDLNHLVSATMSGVTTCLRFPGQLNADLRKLAVNMVPFPRLHFFMPGFAPLTSRGSQQYRALTVPELTQQVFDAKNMMAACDPRHGRYLTVAAVFRGRMSMKEVDEQMLNVQNKNSSYFVEWIPNNVKTAVCDIPPRGLKMAVTFIGNSTAIQELFKRISEQFTAMFRRKAFLHWYTGEGMDEMEFTEAESNMNDLVSEYQQYQDATAEEEEDFGEEAEEEA</sequence>
<name>TBB5_BOVIN</name>
<gene>
    <name type="primary">TUBB5</name>
</gene>
<organism>
    <name type="scientific">Bos taurus</name>
    <name type="common">Bovine</name>
    <dbReference type="NCBI Taxonomy" id="9913"/>
    <lineage>
        <taxon>Eukaryota</taxon>
        <taxon>Metazoa</taxon>
        <taxon>Chordata</taxon>
        <taxon>Craniata</taxon>
        <taxon>Vertebrata</taxon>
        <taxon>Euteleostomi</taxon>
        <taxon>Mammalia</taxon>
        <taxon>Eutheria</taxon>
        <taxon>Laurasiatheria</taxon>
        <taxon>Artiodactyla</taxon>
        <taxon>Ruminantia</taxon>
        <taxon>Pecora</taxon>
        <taxon>Bovidae</taxon>
        <taxon>Bovinae</taxon>
        <taxon>Bos</taxon>
    </lineage>
</organism>
<keyword id="KW-0007">Acetylation</keyword>
<keyword id="KW-0963">Cytoplasm</keyword>
<keyword id="KW-0206">Cytoskeleton</keyword>
<keyword id="KW-0342">GTP-binding</keyword>
<keyword id="KW-1017">Isopeptide bond</keyword>
<keyword id="KW-0460">Magnesium</keyword>
<keyword id="KW-0479">Metal-binding</keyword>
<keyword id="KW-0488">Methylation</keyword>
<keyword id="KW-0493">Microtubule</keyword>
<keyword id="KW-0547">Nucleotide-binding</keyword>
<keyword id="KW-0597">Phosphoprotein</keyword>
<keyword id="KW-1185">Reference proteome</keyword>
<keyword id="KW-0832">Ubl conjugation</keyword>
<proteinExistence type="evidence at protein level"/>